<dbReference type="EMBL" id="AE001363">
    <property type="protein sequence ID" value="AAD18476.1"/>
    <property type="molecule type" value="Genomic_DNA"/>
</dbReference>
<dbReference type="EMBL" id="AE002161">
    <property type="protein sequence ID" value="AAF38272.1"/>
    <property type="molecule type" value="Genomic_DNA"/>
</dbReference>
<dbReference type="EMBL" id="BA000008">
    <property type="protein sequence ID" value="BAA98537.1"/>
    <property type="molecule type" value="Genomic_DNA"/>
</dbReference>
<dbReference type="EMBL" id="AE009440">
    <property type="protein sequence ID" value="AAP98270.1"/>
    <property type="molecule type" value="Genomic_DNA"/>
</dbReference>
<dbReference type="PIR" id="G86531">
    <property type="entry name" value="G86531"/>
</dbReference>
<dbReference type="PIR" id="H72091">
    <property type="entry name" value="H72091"/>
</dbReference>
<dbReference type="RefSeq" id="NP_224532.1">
    <property type="nucleotide sequence ID" value="NC_000922.1"/>
</dbReference>
<dbReference type="RefSeq" id="WP_010882975.1">
    <property type="nucleotide sequence ID" value="NZ_LN847257.1"/>
</dbReference>
<dbReference type="SMR" id="Q9Z8L1"/>
<dbReference type="STRING" id="406984.CPK_ORF00837"/>
<dbReference type="GeneID" id="45050376"/>
<dbReference type="KEGG" id="cpa:CP_0430"/>
<dbReference type="KEGG" id="cpj:rl28"/>
<dbReference type="KEGG" id="cpn:CPn_0327"/>
<dbReference type="KEGG" id="cpt:CpB0337"/>
<dbReference type="PATRIC" id="fig|115713.3.peg.363"/>
<dbReference type="eggNOG" id="COG0227">
    <property type="taxonomic scope" value="Bacteria"/>
</dbReference>
<dbReference type="HOGENOM" id="CLU_064548_3_2_0"/>
<dbReference type="OMA" id="WFAEENR"/>
<dbReference type="OrthoDB" id="9805609at2"/>
<dbReference type="Proteomes" id="UP000000583">
    <property type="component" value="Chromosome"/>
</dbReference>
<dbReference type="Proteomes" id="UP000000801">
    <property type="component" value="Chromosome"/>
</dbReference>
<dbReference type="GO" id="GO:1990904">
    <property type="term" value="C:ribonucleoprotein complex"/>
    <property type="evidence" value="ECO:0007669"/>
    <property type="project" value="UniProtKB-KW"/>
</dbReference>
<dbReference type="GO" id="GO:0005840">
    <property type="term" value="C:ribosome"/>
    <property type="evidence" value="ECO:0007669"/>
    <property type="project" value="UniProtKB-KW"/>
</dbReference>
<dbReference type="GO" id="GO:0003735">
    <property type="term" value="F:structural constituent of ribosome"/>
    <property type="evidence" value="ECO:0007669"/>
    <property type="project" value="InterPro"/>
</dbReference>
<dbReference type="GO" id="GO:0006412">
    <property type="term" value="P:translation"/>
    <property type="evidence" value="ECO:0007669"/>
    <property type="project" value="UniProtKB-UniRule"/>
</dbReference>
<dbReference type="Gene3D" id="2.30.170.40">
    <property type="entry name" value="Ribosomal protein L28/L24"/>
    <property type="match status" value="1"/>
</dbReference>
<dbReference type="HAMAP" id="MF_00373">
    <property type="entry name" value="Ribosomal_bL28"/>
    <property type="match status" value="1"/>
</dbReference>
<dbReference type="InterPro" id="IPR026569">
    <property type="entry name" value="Ribosomal_bL28"/>
</dbReference>
<dbReference type="InterPro" id="IPR034704">
    <property type="entry name" value="Ribosomal_bL28/bL31-like_sf"/>
</dbReference>
<dbReference type="InterPro" id="IPR001383">
    <property type="entry name" value="Ribosomal_bL28_bact-type"/>
</dbReference>
<dbReference type="InterPro" id="IPR037147">
    <property type="entry name" value="Ribosomal_bL28_sf"/>
</dbReference>
<dbReference type="NCBIfam" id="TIGR00009">
    <property type="entry name" value="L28"/>
    <property type="match status" value="1"/>
</dbReference>
<dbReference type="PANTHER" id="PTHR13528">
    <property type="entry name" value="39S RIBOSOMAL PROTEIN L28, MITOCHONDRIAL"/>
    <property type="match status" value="1"/>
</dbReference>
<dbReference type="PANTHER" id="PTHR13528:SF2">
    <property type="entry name" value="LARGE RIBOSOMAL SUBUNIT PROTEIN BL28M"/>
    <property type="match status" value="1"/>
</dbReference>
<dbReference type="Pfam" id="PF00830">
    <property type="entry name" value="Ribosomal_L28"/>
    <property type="match status" value="1"/>
</dbReference>
<dbReference type="SUPFAM" id="SSF143800">
    <property type="entry name" value="L28p-like"/>
    <property type="match status" value="1"/>
</dbReference>
<reference key="1">
    <citation type="journal article" date="1999" name="Nat. Genet.">
        <title>Comparative genomes of Chlamydia pneumoniae and C. trachomatis.</title>
        <authorList>
            <person name="Kalman S."/>
            <person name="Mitchell W.P."/>
            <person name="Marathe R."/>
            <person name="Lammel C.J."/>
            <person name="Fan J."/>
            <person name="Hyman R.W."/>
            <person name="Olinger L."/>
            <person name="Grimwood J."/>
            <person name="Davis R.W."/>
            <person name="Stephens R.S."/>
        </authorList>
    </citation>
    <scope>NUCLEOTIDE SEQUENCE [LARGE SCALE GENOMIC DNA]</scope>
    <source>
        <strain>CWL029</strain>
    </source>
</reference>
<reference key="2">
    <citation type="journal article" date="2000" name="Nucleic Acids Res.">
        <title>Genome sequences of Chlamydia trachomatis MoPn and Chlamydia pneumoniae AR39.</title>
        <authorList>
            <person name="Read T.D."/>
            <person name="Brunham R.C."/>
            <person name="Shen C."/>
            <person name="Gill S.R."/>
            <person name="Heidelberg J.F."/>
            <person name="White O."/>
            <person name="Hickey E.K."/>
            <person name="Peterson J.D."/>
            <person name="Utterback T.R."/>
            <person name="Berry K.J."/>
            <person name="Bass S."/>
            <person name="Linher K.D."/>
            <person name="Weidman J.F."/>
            <person name="Khouri H.M."/>
            <person name="Craven B."/>
            <person name="Bowman C."/>
            <person name="Dodson R.J."/>
            <person name="Gwinn M.L."/>
            <person name="Nelson W.C."/>
            <person name="DeBoy R.T."/>
            <person name="Kolonay J.F."/>
            <person name="McClarty G."/>
            <person name="Salzberg S.L."/>
            <person name="Eisen J.A."/>
            <person name="Fraser C.M."/>
        </authorList>
    </citation>
    <scope>NUCLEOTIDE SEQUENCE [LARGE SCALE GENOMIC DNA]</scope>
    <source>
        <strain>AR39</strain>
    </source>
</reference>
<reference key="3">
    <citation type="journal article" date="2000" name="Nucleic Acids Res.">
        <title>Comparison of whole genome sequences of Chlamydia pneumoniae J138 from Japan and CWL029 from USA.</title>
        <authorList>
            <person name="Shirai M."/>
            <person name="Hirakawa H."/>
            <person name="Kimoto M."/>
            <person name="Tabuchi M."/>
            <person name="Kishi F."/>
            <person name="Ouchi K."/>
            <person name="Shiba T."/>
            <person name="Ishii K."/>
            <person name="Hattori M."/>
            <person name="Kuhara S."/>
            <person name="Nakazawa T."/>
        </authorList>
    </citation>
    <scope>NUCLEOTIDE SEQUENCE [LARGE SCALE GENOMIC DNA]</scope>
    <source>
        <strain>J138</strain>
    </source>
</reference>
<reference key="4">
    <citation type="submission" date="2002-05" db="EMBL/GenBank/DDBJ databases">
        <title>The genome sequence of Chlamydia pneumoniae TW183 and comparison with other Chlamydia strains based on whole genome sequence analysis.</title>
        <authorList>
            <person name="Geng M.M."/>
            <person name="Schuhmacher A."/>
            <person name="Muehldorfer I."/>
            <person name="Bensch K.W."/>
            <person name="Schaefer K.P."/>
            <person name="Schneider S."/>
            <person name="Pohl T."/>
            <person name="Essig A."/>
            <person name="Marre R."/>
            <person name="Melchers K."/>
        </authorList>
    </citation>
    <scope>NUCLEOTIDE SEQUENCE [LARGE SCALE GENOMIC DNA]</scope>
    <source>
        <strain>TW-183</strain>
    </source>
</reference>
<feature type="chain" id="PRO_0000178455" description="Large ribosomal subunit protein bL28">
    <location>
        <begin position="1"/>
        <end position="89"/>
    </location>
</feature>
<sequence length="89" mass="10364">MSRKCPLTGKRPRRGYSYTLRGIAKKKKGIGLKVTGKTKRRFFPNMLTKRLWSTEENRFLKLKISASALRHIDKLGLEKVLERAKSKNF</sequence>
<proteinExistence type="inferred from homology"/>
<accession>Q9Z8L1</accession>
<accession>Q9JQ67</accession>
<gene>
    <name evidence="1" type="primary">rpmB</name>
    <name type="synonym">rl28</name>
    <name type="ordered locus">CPn_0327</name>
    <name type="ordered locus">CP_0430</name>
    <name type="ordered locus">CpB0337</name>
</gene>
<evidence type="ECO:0000255" key="1">
    <source>
        <dbReference type="HAMAP-Rule" id="MF_00373"/>
    </source>
</evidence>
<evidence type="ECO:0000305" key="2"/>
<comment type="similarity">
    <text evidence="1">Belongs to the bacterial ribosomal protein bL28 family.</text>
</comment>
<name>RL28_CHLPN</name>
<keyword id="KW-0687">Ribonucleoprotein</keyword>
<keyword id="KW-0689">Ribosomal protein</keyword>
<organism>
    <name type="scientific">Chlamydia pneumoniae</name>
    <name type="common">Chlamydophila pneumoniae</name>
    <dbReference type="NCBI Taxonomy" id="83558"/>
    <lineage>
        <taxon>Bacteria</taxon>
        <taxon>Pseudomonadati</taxon>
        <taxon>Chlamydiota</taxon>
        <taxon>Chlamydiia</taxon>
        <taxon>Chlamydiales</taxon>
        <taxon>Chlamydiaceae</taxon>
        <taxon>Chlamydia/Chlamydophila group</taxon>
        <taxon>Chlamydia</taxon>
    </lineage>
</organism>
<protein>
    <recommendedName>
        <fullName evidence="1">Large ribosomal subunit protein bL28</fullName>
    </recommendedName>
    <alternativeName>
        <fullName evidence="2">50S ribosomal protein L28</fullName>
    </alternativeName>
</protein>